<gene>
    <name evidence="2" type="primary">mutM</name>
    <name evidence="2" type="synonym">fpg</name>
    <name type="ordered locus">RC1038</name>
</gene>
<accession>Q92GT4</accession>
<dbReference type="EC" id="3.2.2.23" evidence="2"/>
<dbReference type="EC" id="4.2.99.18" evidence="2"/>
<dbReference type="EMBL" id="AE006914">
    <property type="protein sequence ID" value="AAL03576.1"/>
    <property type="molecule type" value="Genomic_DNA"/>
</dbReference>
<dbReference type="PIR" id="F97829">
    <property type="entry name" value="F97829"/>
</dbReference>
<dbReference type="RefSeq" id="WP_010977616.1">
    <property type="nucleotide sequence ID" value="NC_003103.1"/>
</dbReference>
<dbReference type="SMR" id="Q92GT4"/>
<dbReference type="GeneID" id="928184"/>
<dbReference type="KEGG" id="rco:RC1038"/>
<dbReference type="PATRIC" id="fig|272944.4.peg.1186"/>
<dbReference type="HOGENOM" id="CLU_038423_1_1_5"/>
<dbReference type="Proteomes" id="UP000000816">
    <property type="component" value="Chromosome"/>
</dbReference>
<dbReference type="GO" id="GO:0034039">
    <property type="term" value="F:8-oxo-7,8-dihydroguanine DNA N-glycosylase activity"/>
    <property type="evidence" value="ECO:0007669"/>
    <property type="project" value="TreeGrafter"/>
</dbReference>
<dbReference type="GO" id="GO:0140078">
    <property type="term" value="F:class I DNA-(apurinic or apyrimidinic site) endonuclease activity"/>
    <property type="evidence" value="ECO:0007669"/>
    <property type="project" value="UniProtKB-EC"/>
</dbReference>
<dbReference type="GO" id="GO:0003684">
    <property type="term" value="F:damaged DNA binding"/>
    <property type="evidence" value="ECO:0007669"/>
    <property type="project" value="InterPro"/>
</dbReference>
<dbReference type="GO" id="GO:0008270">
    <property type="term" value="F:zinc ion binding"/>
    <property type="evidence" value="ECO:0007669"/>
    <property type="project" value="UniProtKB-UniRule"/>
</dbReference>
<dbReference type="GO" id="GO:0006284">
    <property type="term" value="P:base-excision repair"/>
    <property type="evidence" value="ECO:0007669"/>
    <property type="project" value="InterPro"/>
</dbReference>
<dbReference type="CDD" id="cd08966">
    <property type="entry name" value="EcFpg-like_N"/>
    <property type="match status" value="1"/>
</dbReference>
<dbReference type="FunFam" id="1.10.8.50:FF:000003">
    <property type="entry name" value="Formamidopyrimidine-DNA glycosylase"/>
    <property type="match status" value="1"/>
</dbReference>
<dbReference type="Gene3D" id="1.10.8.50">
    <property type="match status" value="1"/>
</dbReference>
<dbReference type="Gene3D" id="3.20.190.10">
    <property type="entry name" value="MutM-like, N-terminal"/>
    <property type="match status" value="1"/>
</dbReference>
<dbReference type="HAMAP" id="MF_00103">
    <property type="entry name" value="Fapy_DNA_glycosyl"/>
    <property type="match status" value="1"/>
</dbReference>
<dbReference type="InterPro" id="IPR015886">
    <property type="entry name" value="DNA_glyclase/AP_lyase_DNA-bd"/>
</dbReference>
<dbReference type="InterPro" id="IPR015887">
    <property type="entry name" value="DNA_glyclase_Znf_dom_DNA_BS"/>
</dbReference>
<dbReference type="InterPro" id="IPR020629">
    <property type="entry name" value="Formamido-pyr_DNA_Glyclase"/>
</dbReference>
<dbReference type="InterPro" id="IPR012319">
    <property type="entry name" value="FPG_cat"/>
</dbReference>
<dbReference type="InterPro" id="IPR035937">
    <property type="entry name" value="MutM-like_N-ter"/>
</dbReference>
<dbReference type="InterPro" id="IPR010979">
    <property type="entry name" value="Ribosomal_uS13-like_H2TH"/>
</dbReference>
<dbReference type="InterPro" id="IPR000214">
    <property type="entry name" value="Znf_DNA_glyclase/AP_lyase"/>
</dbReference>
<dbReference type="InterPro" id="IPR010663">
    <property type="entry name" value="Znf_FPG/IleRS"/>
</dbReference>
<dbReference type="NCBIfam" id="TIGR00577">
    <property type="entry name" value="fpg"/>
    <property type="match status" value="1"/>
</dbReference>
<dbReference type="NCBIfam" id="NF002211">
    <property type="entry name" value="PRK01103.1"/>
    <property type="match status" value="1"/>
</dbReference>
<dbReference type="PANTHER" id="PTHR22993">
    <property type="entry name" value="FORMAMIDOPYRIMIDINE-DNA GLYCOSYLASE"/>
    <property type="match status" value="1"/>
</dbReference>
<dbReference type="PANTHER" id="PTHR22993:SF9">
    <property type="entry name" value="FORMAMIDOPYRIMIDINE-DNA GLYCOSYLASE"/>
    <property type="match status" value="1"/>
</dbReference>
<dbReference type="Pfam" id="PF01149">
    <property type="entry name" value="Fapy_DNA_glyco"/>
    <property type="match status" value="1"/>
</dbReference>
<dbReference type="Pfam" id="PF06831">
    <property type="entry name" value="H2TH"/>
    <property type="match status" value="1"/>
</dbReference>
<dbReference type="Pfam" id="PF06827">
    <property type="entry name" value="zf-FPG_IleRS"/>
    <property type="match status" value="1"/>
</dbReference>
<dbReference type="SMART" id="SM00898">
    <property type="entry name" value="Fapy_DNA_glyco"/>
    <property type="match status" value="1"/>
</dbReference>
<dbReference type="SMART" id="SM01232">
    <property type="entry name" value="H2TH"/>
    <property type="match status" value="1"/>
</dbReference>
<dbReference type="SUPFAM" id="SSF57716">
    <property type="entry name" value="Glucocorticoid receptor-like (DNA-binding domain)"/>
    <property type="match status" value="1"/>
</dbReference>
<dbReference type="SUPFAM" id="SSF81624">
    <property type="entry name" value="N-terminal domain of MutM-like DNA repair proteins"/>
    <property type="match status" value="1"/>
</dbReference>
<dbReference type="SUPFAM" id="SSF46946">
    <property type="entry name" value="S13-like H2TH domain"/>
    <property type="match status" value="1"/>
</dbReference>
<dbReference type="PROSITE" id="PS51068">
    <property type="entry name" value="FPG_CAT"/>
    <property type="match status" value="1"/>
</dbReference>
<dbReference type="PROSITE" id="PS01242">
    <property type="entry name" value="ZF_FPG_1"/>
    <property type="match status" value="1"/>
</dbReference>
<dbReference type="PROSITE" id="PS51066">
    <property type="entry name" value="ZF_FPG_2"/>
    <property type="match status" value="1"/>
</dbReference>
<organism>
    <name type="scientific">Rickettsia conorii (strain ATCC VR-613 / Malish 7)</name>
    <dbReference type="NCBI Taxonomy" id="272944"/>
    <lineage>
        <taxon>Bacteria</taxon>
        <taxon>Pseudomonadati</taxon>
        <taxon>Pseudomonadota</taxon>
        <taxon>Alphaproteobacteria</taxon>
        <taxon>Rickettsiales</taxon>
        <taxon>Rickettsiaceae</taxon>
        <taxon>Rickettsieae</taxon>
        <taxon>Rickettsia</taxon>
        <taxon>spotted fever group</taxon>
    </lineage>
</organism>
<evidence type="ECO:0000250" key="1"/>
<evidence type="ECO:0000255" key="2">
    <source>
        <dbReference type="HAMAP-Rule" id="MF_00103"/>
    </source>
</evidence>
<sequence length="273" mass="31200">MPELPEVETLKNSLKDKLIGLIIENVELKRDNLRYKLSPLLATETLNTNILDVRRRAKYLIIDFNNDYSLIVHLGMSGRFTLQSANYKTQKHDHVIFDLSNGEKLIFNDTRRFGMIYSFKTDLLEKEFLNDLGIEPFSDLLTLEYLKDKLQTKKIPIKNLIMDNRVIVGVGNIYASESLHLARIHPDKSGNNLRDDEIENLIKAIRDVLTKAITAGGTTLKDFVNGDNKPGYFTKQLKVYGREGQSCLSCSSTIIKIKHSGRSTFYCKTCQYS</sequence>
<comment type="function">
    <text evidence="2">Involved in base excision repair of DNA damaged by oxidation or by mutagenic agents. Acts as a DNA glycosylase that recognizes and removes damaged bases. Has a preference for oxidized purines, such as 7,8-dihydro-8-oxoguanine (8-oxoG). Has AP (apurinic/apyrimidinic) lyase activity and introduces nicks in the DNA strand. Cleaves the DNA backbone by beta-delta elimination to generate a single-strand break at the site of the removed base with both 3'- and 5'-phosphates.</text>
</comment>
<comment type="catalytic activity">
    <reaction evidence="2">
        <text>Hydrolysis of DNA containing ring-opened 7-methylguanine residues, releasing 2,6-diamino-4-hydroxy-5-(N-methyl)formamidopyrimidine.</text>
        <dbReference type="EC" id="3.2.2.23"/>
    </reaction>
</comment>
<comment type="catalytic activity">
    <reaction evidence="2">
        <text>2'-deoxyribonucleotide-(2'-deoxyribose 5'-phosphate)-2'-deoxyribonucleotide-DNA = a 3'-end 2'-deoxyribonucleotide-(2,3-dehydro-2,3-deoxyribose 5'-phosphate)-DNA + a 5'-end 5'-phospho-2'-deoxyribonucleoside-DNA + H(+)</text>
        <dbReference type="Rhea" id="RHEA:66592"/>
        <dbReference type="Rhea" id="RHEA-COMP:13180"/>
        <dbReference type="Rhea" id="RHEA-COMP:16897"/>
        <dbReference type="Rhea" id="RHEA-COMP:17067"/>
        <dbReference type="ChEBI" id="CHEBI:15378"/>
        <dbReference type="ChEBI" id="CHEBI:136412"/>
        <dbReference type="ChEBI" id="CHEBI:157695"/>
        <dbReference type="ChEBI" id="CHEBI:167181"/>
        <dbReference type="EC" id="4.2.99.18"/>
    </reaction>
</comment>
<comment type="cofactor">
    <cofactor evidence="2">
        <name>Zn(2+)</name>
        <dbReference type="ChEBI" id="CHEBI:29105"/>
    </cofactor>
    <text evidence="2">Binds 1 zinc ion per subunit.</text>
</comment>
<comment type="subunit">
    <text evidence="2">Monomer.</text>
</comment>
<comment type="similarity">
    <text evidence="2">Belongs to the FPG family.</text>
</comment>
<proteinExistence type="inferred from homology"/>
<name>FPG_RICCN</name>
<keyword id="KW-0227">DNA damage</keyword>
<keyword id="KW-0234">DNA repair</keyword>
<keyword id="KW-0238">DNA-binding</keyword>
<keyword id="KW-0326">Glycosidase</keyword>
<keyword id="KW-0378">Hydrolase</keyword>
<keyword id="KW-0456">Lyase</keyword>
<keyword id="KW-0479">Metal-binding</keyword>
<keyword id="KW-0511">Multifunctional enzyme</keyword>
<keyword id="KW-0862">Zinc</keyword>
<keyword id="KW-0863">Zinc-finger</keyword>
<protein>
    <recommendedName>
        <fullName evidence="2">Formamidopyrimidine-DNA glycosylase</fullName>
        <shortName evidence="2">Fapy-DNA glycosylase</shortName>
        <ecNumber evidence="2">3.2.2.23</ecNumber>
    </recommendedName>
    <alternativeName>
        <fullName evidence="2">DNA-(apurinic or apyrimidinic site) lyase MutM</fullName>
        <shortName evidence="2">AP lyase MutM</shortName>
        <ecNumber evidence="2">4.2.99.18</ecNumber>
    </alternativeName>
</protein>
<reference key="1">
    <citation type="journal article" date="2001" name="Science">
        <title>Mechanisms of evolution in Rickettsia conorii and R. prowazekii.</title>
        <authorList>
            <person name="Ogata H."/>
            <person name="Audic S."/>
            <person name="Renesto-Audiffren P."/>
            <person name="Fournier P.-E."/>
            <person name="Barbe V."/>
            <person name="Samson D."/>
            <person name="Roux V."/>
            <person name="Cossart P."/>
            <person name="Weissenbach J."/>
            <person name="Claverie J.-M."/>
            <person name="Raoult D."/>
        </authorList>
    </citation>
    <scope>NUCLEOTIDE SEQUENCE [LARGE SCALE GENOMIC DNA]</scope>
    <source>
        <strain>ATCC VR-613 / Malish 7</strain>
    </source>
</reference>
<feature type="initiator methionine" description="Removed" evidence="1">
    <location>
        <position position="1"/>
    </location>
</feature>
<feature type="chain" id="PRO_0000170858" description="Formamidopyrimidine-DNA glycosylase">
    <location>
        <begin position="2"/>
        <end position="273"/>
    </location>
</feature>
<feature type="zinc finger region" description="FPG-type" evidence="2">
    <location>
        <begin position="238"/>
        <end position="272"/>
    </location>
</feature>
<feature type="active site" description="Schiff-base intermediate with DNA" evidence="2">
    <location>
        <position position="2"/>
    </location>
</feature>
<feature type="active site" description="Proton donor" evidence="2">
    <location>
        <position position="3"/>
    </location>
</feature>
<feature type="active site" description="Proton donor; for beta-elimination activity" evidence="2">
    <location>
        <position position="58"/>
    </location>
</feature>
<feature type="active site" description="Proton donor; for delta-elimination activity" evidence="2">
    <location>
        <position position="262"/>
    </location>
</feature>
<feature type="binding site" evidence="2">
    <location>
        <position position="92"/>
    </location>
    <ligand>
        <name>DNA</name>
        <dbReference type="ChEBI" id="CHEBI:16991"/>
    </ligand>
</feature>
<feature type="binding site" evidence="2">
    <location>
        <position position="111"/>
    </location>
    <ligand>
        <name>DNA</name>
        <dbReference type="ChEBI" id="CHEBI:16991"/>
    </ligand>
</feature>
<feature type="binding site" evidence="2">
    <location>
        <position position="153"/>
    </location>
    <ligand>
        <name>DNA</name>
        <dbReference type="ChEBI" id="CHEBI:16991"/>
    </ligand>
</feature>